<accession>A8GDR1</accession>
<organism>
    <name type="scientific">Serratia proteamaculans (strain 568)</name>
    <dbReference type="NCBI Taxonomy" id="399741"/>
    <lineage>
        <taxon>Bacteria</taxon>
        <taxon>Pseudomonadati</taxon>
        <taxon>Pseudomonadota</taxon>
        <taxon>Gammaproteobacteria</taxon>
        <taxon>Enterobacterales</taxon>
        <taxon>Yersiniaceae</taxon>
        <taxon>Serratia</taxon>
    </lineage>
</organism>
<feature type="chain" id="PRO_1000060566" description="Integration host factor subunit alpha">
    <location>
        <begin position="1"/>
        <end position="98"/>
    </location>
</feature>
<feature type="region of interest" description="Disordered" evidence="2">
    <location>
        <begin position="49"/>
        <end position="70"/>
    </location>
</feature>
<sequence length="98" mass="11199">MALTKAEMSEHLFEKLGLSKRDAKDLVELFFEEVRRALENGEQVKLSGFGNFDLRDKNQRPGRNPKTGEDIPITARRVVTFRPGQKLKSRVENASPKE</sequence>
<name>IHFA_SERP5</name>
<comment type="function">
    <text evidence="1">This protein is one of the two subunits of integration host factor, a specific DNA-binding protein that functions in genetic recombination as well as in transcriptional and translational control.</text>
</comment>
<comment type="subunit">
    <text evidence="1">Heterodimer of an alpha and a beta chain.</text>
</comment>
<comment type="similarity">
    <text evidence="1">Belongs to the bacterial histone-like protein family.</text>
</comment>
<proteinExistence type="inferred from homology"/>
<protein>
    <recommendedName>
        <fullName evidence="1">Integration host factor subunit alpha</fullName>
        <shortName evidence="1">IHF-alpha</shortName>
    </recommendedName>
</protein>
<dbReference type="EMBL" id="CP000826">
    <property type="protein sequence ID" value="ABV41251.1"/>
    <property type="molecule type" value="Genomic_DNA"/>
</dbReference>
<dbReference type="SMR" id="A8GDR1"/>
<dbReference type="STRING" id="399741.Spro_2150"/>
<dbReference type="KEGG" id="spe:Spro_2150"/>
<dbReference type="eggNOG" id="COG0776">
    <property type="taxonomic scope" value="Bacteria"/>
</dbReference>
<dbReference type="HOGENOM" id="CLU_105066_1_3_6"/>
<dbReference type="OrthoDB" id="9797747at2"/>
<dbReference type="GO" id="GO:0005829">
    <property type="term" value="C:cytosol"/>
    <property type="evidence" value="ECO:0007669"/>
    <property type="project" value="TreeGrafter"/>
</dbReference>
<dbReference type="GO" id="GO:0003677">
    <property type="term" value="F:DNA binding"/>
    <property type="evidence" value="ECO:0007669"/>
    <property type="project" value="UniProtKB-UniRule"/>
</dbReference>
<dbReference type="GO" id="GO:0030527">
    <property type="term" value="F:structural constituent of chromatin"/>
    <property type="evidence" value="ECO:0007669"/>
    <property type="project" value="InterPro"/>
</dbReference>
<dbReference type="GO" id="GO:0006310">
    <property type="term" value="P:DNA recombination"/>
    <property type="evidence" value="ECO:0007669"/>
    <property type="project" value="UniProtKB-UniRule"/>
</dbReference>
<dbReference type="GO" id="GO:0009893">
    <property type="term" value="P:positive regulation of metabolic process"/>
    <property type="evidence" value="ECO:0007669"/>
    <property type="project" value="UniProtKB-ARBA"/>
</dbReference>
<dbReference type="GO" id="GO:0006355">
    <property type="term" value="P:regulation of DNA-templated transcription"/>
    <property type="evidence" value="ECO:0007669"/>
    <property type="project" value="UniProtKB-UniRule"/>
</dbReference>
<dbReference type="GO" id="GO:0006417">
    <property type="term" value="P:regulation of translation"/>
    <property type="evidence" value="ECO:0007669"/>
    <property type="project" value="UniProtKB-UniRule"/>
</dbReference>
<dbReference type="CDD" id="cd13835">
    <property type="entry name" value="IHF_A"/>
    <property type="match status" value="1"/>
</dbReference>
<dbReference type="FunFam" id="4.10.520.10:FF:000002">
    <property type="entry name" value="Integration host factor subunit alpha"/>
    <property type="match status" value="1"/>
</dbReference>
<dbReference type="Gene3D" id="4.10.520.10">
    <property type="entry name" value="IHF-like DNA-binding proteins"/>
    <property type="match status" value="1"/>
</dbReference>
<dbReference type="HAMAP" id="MF_00380">
    <property type="entry name" value="IHF_alpha"/>
    <property type="match status" value="1"/>
</dbReference>
<dbReference type="InterPro" id="IPR000119">
    <property type="entry name" value="Hist_DNA-bd"/>
</dbReference>
<dbReference type="InterPro" id="IPR020816">
    <property type="entry name" value="Histone-like_DNA-bd_CS"/>
</dbReference>
<dbReference type="InterPro" id="IPR010992">
    <property type="entry name" value="IHF-like_DNA-bd_dom_sf"/>
</dbReference>
<dbReference type="InterPro" id="IPR005684">
    <property type="entry name" value="IHF_alpha"/>
</dbReference>
<dbReference type="NCBIfam" id="TIGR00987">
    <property type="entry name" value="himA"/>
    <property type="match status" value="1"/>
</dbReference>
<dbReference type="NCBIfam" id="NF001401">
    <property type="entry name" value="PRK00285.1"/>
    <property type="match status" value="1"/>
</dbReference>
<dbReference type="PANTHER" id="PTHR33175">
    <property type="entry name" value="DNA-BINDING PROTEIN HU"/>
    <property type="match status" value="1"/>
</dbReference>
<dbReference type="PANTHER" id="PTHR33175:SF2">
    <property type="entry name" value="INTEGRATION HOST FACTOR SUBUNIT ALPHA"/>
    <property type="match status" value="1"/>
</dbReference>
<dbReference type="Pfam" id="PF00216">
    <property type="entry name" value="Bac_DNA_binding"/>
    <property type="match status" value="1"/>
</dbReference>
<dbReference type="PRINTS" id="PR01727">
    <property type="entry name" value="DNABINDINGHU"/>
</dbReference>
<dbReference type="SMART" id="SM00411">
    <property type="entry name" value="BHL"/>
    <property type="match status" value="1"/>
</dbReference>
<dbReference type="SUPFAM" id="SSF47729">
    <property type="entry name" value="IHF-like DNA-binding proteins"/>
    <property type="match status" value="1"/>
</dbReference>
<dbReference type="PROSITE" id="PS00045">
    <property type="entry name" value="HISTONE_LIKE"/>
    <property type="match status" value="1"/>
</dbReference>
<evidence type="ECO:0000255" key="1">
    <source>
        <dbReference type="HAMAP-Rule" id="MF_00380"/>
    </source>
</evidence>
<evidence type="ECO:0000256" key="2">
    <source>
        <dbReference type="SAM" id="MobiDB-lite"/>
    </source>
</evidence>
<reference key="1">
    <citation type="submission" date="2007-09" db="EMBL/GenBank/DDBJ databases">
        <title>Complete sequence of chromosome of Serratia proteamaculans 568.</title>
        <authorList>
            <consortium name="US DOE Joint Genome Institute"/>
            <person name="Copeland A."/>
            <person name="Lucas S."/>
            <person name="Lapidus A."/>
            <person name="Barry K."/>
            <person name="Glavina del Rio T."/>
            <person name="Dalin E."/>
            <person name="Tice H."/>
            <person name="Pitluck S."/>
            <person name="Chain P."/>
            <person name="Malfatti S."/>
            <person name="Shin M."/>
            <person name="Vergez L."/>
            <person name="Schmutz J."/>
            <person name="Larimer F."/>
            <person name="Land M."/>
            <person name="Hauser L."/>
            <person name="Kyrpides N."/>
            <person name="Kim E."/>
            <person name="Taghavi S."/>
            <person name="Newman L."/>
            <person name="Vangronsveld J."/>
            <person name="van der Lelie D."/>
            <person name="Richardson P."/>
        </authorList>
    </citation>
    <scope>NUCLEOTIDE SEQUENCE [LARGE SCALE GENOMIC DNA]</scope>
    <source>
        <strain>568</strain>
    </source>
</reference>
<gene>
    <name evidence="1" type="primary">ihfA</name>
    <name evidence="1" type="synonym">himA</name>
    <name type="ordered locus">Spro_2150</name>
</gene>
<keyword id="KW-0233">DNA recombination</keyword>
<keyword id="KW-0238">DNA-binding</keyword>
<keyword id="KW-0804">Transcription</keyword>
<keyword id="KW-0805">Transcription regulation</keyword>
<keyword id="KW-0810">Translation regulation</keyword>